<feature type="chain" id="PRO_0000344816" description="Ribonuclease Y">
    <location>
        <begin position="1"/>
        <end position="520"/>
    </location>
</feature>
<feature type="transmembrane region" description="Helical" evidence="1">
    <location>
        <begin position="4"/>
        <end position="24"/>
    </location>
</feature>
<feature type="domain" description="KH" evidence="1">
    <location>
        <begin position="210"/>
        <end position="273"/>
    </location>
</feature>
<feature type="domain" description="HD" evidence="2">
    <location>
        <begin position="336"/>
        <end position="429"/>
    </location>
</feature>
<proteinExistence type="inferred from homology"/>
<comment type="function">
    <text evidence="1">Endoribonuclease that initiates mRNA decay.</text>
</comment>
<comment type="subcellular location">
    <subcellularLocation>
        <location evidence="1">Cell membrane</location>
        <topology evidence="1">Single-pass membrane protein</topology>
    </subcellularLocation>
</comment>
<comment type="similarity">
    <text evidence="1">Belongs to the RNase Y family.</text>
</comment>
<evidence type="ECO:0000255" key="1">
    <source>
        <dbReference type="HAMAP-Rule" id="MF_00335"/>
    </source>
</evidence>
<evidence type="ECO:0000255" key="2">
    <source>
        <dbReference type="PROSITE-ProRule" id="PRU01175"/>
    </source>
</evidence>
<reference key="1">
    <citation type="journal article" date="2006" name="J. Bacteriol.">
        <title>Pathogenomic sequence analysis of Bacillus cereus and Bacillus thuringiensis isolates closely related to Bacillus anthracis.</title>
        <authorList>
            <person name="Han C.S."/>
            <person name="Xie G."/>
            <person name="Challacombe J.F."/>
            <person name="Altherr M.R."/>
            <person name="Bhotika S.S."/>
            <person name="Bruce D."/>
            <person name="Campbell C.S."/>
            <person name="Campbell M.L."/>
            <person name="Chen J."/>
            <person name="Chertkov O."/>
            <person name="Cleland C."/>
            <person name="Dimitrijevic M."/>
            <person name="Doggett N.A."/>
            <person name="Fawcett J.J."/>
            <person name="Glavina T."/>
            <person name="Goodwin L.A."/>
            <person name="Hill K.K."/>
            <person name="Hitchcock P."/>
            <person name="Jackson P.J."/>
            <person name="Keim P."/>
            <person name="Kewalramani A.R."/>
            <person name="Longmire J."/>
            <person name="Lucas S."/>
            <person name="Malfatti S."/>
            <person name="McMurry K."/>
            <person name="Meincke L.J."/>
            <person name="Misra M."/>
            <person name="Moseman B.L."/>
            <person name="Mundt M."/>
            <person name="Munk A.C."/>
            <person name="Okinaka R.T."/>
            <person name="Parson-Quintana B."/>
            <person name="Reilly L.P."/>
            <person name="Richardson P."/>
            <person name="Robinson D.L."/>
            <person name="Rubin E."/>
            <person name="Saunders E."/>
            <person name="Tapia R."/>
            <person name="Tesmer J.G."/>
            <person name="Thayer N."/>
            <person name="Thompson L.S."/>
            <person name="Tice H."/>
            <person name="Ticknor L.O."/>
            <person name="Wills P.L."/>
            <person name="Brettin T.S."/>
            <person name="Gilna P."/>
        </authorList>
    </citation>
    <scope>NUCLEOTIDE SEQUENCE [LARGE SCALE GENOMIC DNA]</scope>
    <source>
        <strain>ZK / E33L</strain>
    </source>
</reference>
<keyword id="KW-1003">Cell membrane</keyword>
<keyword id="KW-0255">Endonuclease</keyword>
<keyword id="KW-0378">Hydrolase</keyword>
<keyword id="KW-0472">Membrane</keyword>
<keyword id="KW-0540">Nuclease</keyword>
<keyword id="KW-0694">RNA-binding</keyword>
<keyword id="KW-0812">Transmembrane</keyword>
<keyword id="KW-1133">Transmembrane helix</keyword>
<accession>Q636P8</accession>
<protein>
    <recommendedName>
        <fullName evidence="1">Ribonuclease Y</fullName>
        <shortName evidence="1">RNase Y</shortName>
        <ecNumber evidence="1">3.1.-.-</ecNumber>
    </recommendedName>
</protein>
<name>RNY_BACCZ</name>
<organism>
    <name type="scientific">Bacillus cereus (strain ZK / E33L)</name>
    <dbReference type="NCBI Taxonomy" id="288681"/>
    <lineage>
        <taxon>Bacteria</taxon>
        <taxon>Bacillati</taxon>
        <taxon>Bacillota</taxon>
        <taxon>Bacilli</taxon>
        <taxon>Bacillales</taxon>
        <taxon>Bacillaceae</taxon>
        <taxon>Bacillus</taxon>
        <taxon>Bacillus cereus group</taxon>
    </lineage>
</organism>
<gene>
    <name evidence="1" type="primary">rny</name>
    <name type="ordered locus">BCE33L3537</name>
</gene>
<sequence>MSSTVWILISILLATVGAVVGFFVRKSIAEAKINGAANEAKRILDEANREAEALKKEALLEAKDEIHTLRTEAELEIRDRRSELQKQENRLMQKEENLDRKDETLDKRELQLEKKEDSLVARQQQIEELESKVGELVQKQQTELERISNLTREQAKAIILGKVESEVSHEIAVMVKESEVRAKEEADKKAKEILSLAMQRCAADHVAETTVSVVNLPNDEMKGRIIGREGRNIRTLETLTGIDLIIDDTPEAVILSGFDPIRRETARIALDKLVQDGRIHPARIEEMVEKSRREVDEYIREVGEQTTFEVGVHGLHPDLIKILGRLKYRTSYGQNVLKHSMEVAYLTGLMAAELGEDEKLARRAGLLHDIGKAIDHEVEGSHVEIGVELATKYKEHPVVINSIASHHGDTEPTSIIAVLVAAADALSAARPGARSETLENYIRRLEKLEEISESYEGVEKSFAIQAGREVRILVKPDTIDDLEAHRLARDIRKRIENELDYPGHIKVTVIRETRAVEYAK</sequence>
<dbReference type="EC" id="3.1.-.-" evidence="1"/>
<dbReference type="EMBL" id="CP000001">
    <property type="protein sequence ID" value="AAU16729.1"/>
    <property type="molecule type" value="Genomic_DNA"/>
</dbReference>
<dbReference type="RefSeq" id="WP_000099773.1">
    <property type="nucleotide sequence ID" value="NZ_CP009968.1"/>
</dbReference>
<dbReference type="SMR" id="Q636P8"/>
<dbReference type="GeneID" id="45023607"/>
<dbReference type="KEGG" id="bcz:BCE33L3537"/>
<dbReference type="PATRIC" id="fig|288681.22.peg.1873"/>
<dbReference type="Proteomes" id="UP000002612">
    <property type="component" value="Chromosome"/>
</dbReference>
<dbReference type="GO" id="GO:0005886">
    <property type="term" value="C:plasma membrane"/>
    <property type="evidence" value="ECO:0007669"/>
    <property type="project" value="UniProtKB-SubCell"/>
</dbReference>
<dbReference type="GO" id="GO:0003723">
    <property type="term" value="F:RNA binding"/>
    <property type="evidence" value="ECO:0007669"/>
    <property type="project" value="UniProtKB-UniRule"/>
</dbReference>
<dbReference type="GO" id="GO:0004521">
    <property type="term" value="F:RNA endonuclease activity"/>
    <property type="evidence" value="ECO:0007669"/>
    <property type="project" value="UniProtKB-UniRule"/>
</dbReference>
<dbReference type="GO" id="GO:0006402">
    <property type="term" value="P:mRNA catabolic process"/>
    <property type="evidence" value="ECO:0007669"/>
    <property type="project" value="UniProtKB-UniRule"/>
</dbReference>
<dbReference type="CDD" id="cd00077">
    <property type="entry name" value="HDc"/>
    <property type="match status" value="1"/>
</dbReference>
<dbReference type="CDD" id="cd22431">
    <property type="entry name" value="KH-I_RNaseY"/>
    <property type="match status" value="1"/>
</dbReference>
<dbReference type="FunFam" id="1.10.3210.10:FF:000003">
    <property type="entry name" value="Ribonuclease Y"/>
    <property type="match status" value="1"/>
</dbReference>
<dbReference type="FunFam" id="3.30.1370.10:FF:000006">
    <property type="entry name" value="Ribonuclease Y"/>
    <property type="match status" value="1"/>
</dbReference>
<dbReference type="Gene3D" id="1.10.3210.10">
    <property type="entry name" value="Hypothetical protein af1432"/>
    <property type="match status" value="1"/>
</dbReference>
<dbReference type="Gene3D" id="3.30.1370.10">
    <property type="entry name" value="K Homology domain, type 1"/>
    <property type="match status" value="1"/>
</dbReference>
<dbReference type="HAMAP" id="MF_00335">
    <property type="entry name" value="RNase_Y"/>
    <property type="match status" value="1"/>
</dbReference>
<dbReference type="InterPro" id="IPR003607">
    <property type="entry name" value="HD/PDEase_dom"/>
</dbReference>
<dbReference type="InterPro" id="IPR006674">
    <property type="entry name" value="HD_domain"/>
</dbReference>
<dbReference type="InterPro" id="IPR006675">
    <property type="entry name" value="HDIG_dom"/>
</dbReference>
<dbReference type="InterPro" id="IPR004087">
    <property type="entry name" value="KH_dom"/>
</dbReference>
<dbReference type="InterPro" id="IPR004088">
    <property type="entry name" value="KH_dom_type_1"/>
</dbReference>
<dbReference type="InterPro" id="IPR036612">
    <property type="entry name" value="KH_dom_type_1_sf"/>
</dbReference>
<dbReference type="InterPro" id="IPR017705">
    <property type="entry name" value="Ribonuclease_Y"/>
</dbReference>
<dbReference type="InterPro" id="IPR022711">
    <property type="entry name" value="RNase_Y_N"/>
</dbReference>
<dbReference type="NCBIfam" id="TIGR00277">
    <property type="entry name" value="HDIG"/>
    <property type="match status" value="1"/>
</dbReference>
<dbReference type="NCBIfam" id="TIGR03319">
    <property type="entry name" value="RNase_Y"/>
    <property type="match status" value="1"/>
</dbReference>
<dbReference type="PANTHER" id="PTHR12826">
    <property type="entry name" value="RIBONUCLEASE Y"/>
    <property type="match status" value="1"/>
</dbReference>
<dbReference type="PANTHER" id="PTHR12826:SF15">
    <property type="entry name" value="RIBONUCLEASE Y"/>
    <property type="match status" value="1"/>
</dbReference>
<dbReference type="Pfam" id="PF01966">
    <property type="entry name" value="HD"/>
    <property type="match status" value="1"/>
</dbReference>
<dbReference type="Pfam" id="PF00013">
    <property type="entry name" value="KH_1"/>
    <property type="match status" value="1"/>
</dbReference>
<dbReference type="Pfam" id="PF12072">
    <property type="entry name" value="RNase_Y_N"/>
    <property type="match status" value="1"/>
</dbReference>
<dbReference type="SMART" id="SM00471">
    <property type="entry name" value="HDc"/>
    <property type="match status" value="1"/>
</dbReference>
<dbReference type="SMART" id="SM00322">
    <property type="entry name" value="KH"/>
    <property type="match status" value="1"/>
</dbReference>
<dbReference type="SUPFAM" id="SSF54791">
    <property type="entry name" value="Eukaryotic type KH-domain (KH-domain type I)"/>
    <property type="match status" value="1"/>
</dbReference>
<dbReference type="SUPFAM" id="SSF109604">
    <property type="entry name" value="HD-domain/PDEase-like"/>
    <property type="match status" value="1"/>
</dbReference>
<dbReference type="PROSITE" id="PS51831">
    <property type="entry name" value="HD"/>
    <property type="match status" value="1"/>
</dbReference>
<dbReference type="PROSITE" id="PS50084">
    <property type="entry name" value="KH_TYPE_1"/>
    <property type="match status" value="1"/>
</dbReference>